<accession>O18789</accession>
<accession>A2V9C7</accession>
<accession>Q3T0W5</accession>
<reference key="1">
    <citation type="submission" date="2005-08" db="EMBL/GenBank/DDBJ databases">
        <authorList>
            <consortium name="NIH - Mammalian Gene Collection (MGC) project"/>
        </authorList>
    </citation>
    <scope>NUCLEOTIDE SEQUENCE [LARGE SCALE MRNA]</scope>
    <source>
        <strain>Crossbred X Angus</strain>
        <tissue>Ileum</tissue>
    </source>
</reference>
<reference key="2">
    <citation type="submission" date="1997-07" db="EMBL/GenBank/DDBJ databases">
        <authorList>
            <person name="Lileinsiek B."/>
            <person name="Rocha M."/>
            <person name="Umansky V."/>
            <person name="Benner A."/>
            <person name="Lin Y."/>
            <person name="Ziegler R."/>
            <person name="Nawroth P.P."/>
            <person name="Schirrmacher V."/>
        </authorList>
    </citation>
    <scope>NUCLEOTIDE SEQUENCE [MRNA] OF 8-293</scope>
    <source>
        <tissue>Aorta</tissue>
    </source>
</reference>
<keyword id="KW-0002">3D-structure</keyword>
<keyword id="KW-0007">Acetylation</keyword>
<keyword id="KW-0164">Citrullination</keyword>
<keyword id="KW-0963">Cytoplasm</keyword>
<keyword id="KW-1017">Isopeptide bond</keyword>
<keyword id="KW-0539">Nucleus</keyword>
<keyword id="KW-0597">Phosphoprotein</keyword>
<keyword id="KW-1185">Reference proteome</keyword>
<keyword id="KW-0687">Ribonucleoprotein</keyword>
<keyword id="KW-0689">Ribosomal protein</keyword>
<keyword id="KW-0832">Ubl conjugation</keyword>
<organism>
    <name type="scientific">Bos taurus</name>
    <name type="common">Bovine</name>
    <dbReference type="NCBI Taxonomy" id="9913"/>
    <lineage>
        <taxon>Eukaryota</taxon>
        <taxon>Metazoa</taxon>
        <taxon>Chordata</taxon>
        <taxon>Craniata</taxon>
        <taxon>Vertebrata</taxon>
        <taxon>Euteleostomi</taxon>
        <taxon>Mammalia</taxon>
        <taxon>Eutheria</taxon>
        <taxon>Laurasiatheria</taxon>
        <taxon>Artiodactyla</taxon>
        <taxon>Ruminantia</taxon>
        <taxon>Pecora</taxon>
        <taxon>Bovidae</taxon>
        <taxon>Bovinae</taxon>
        <taxon>Bos</taxon>
    </lineage>
</organism>
<comment type="function">
    <text evidence="1 2">Component of the ribosome, a large ribonucleoprotein complex responsible for the synthesis of proteins in the cell. The small ribosomal subunit (SSU) binds messenger RNAs (mRNAs) and translates the encoded message by selecting cognate aminoacyl-transfer RNA (tRNA) molecules. The large subunit (LSU) contains the ribosomal catalytic site termed the peptidyl transferase center (PTC), which catalyzes the formation of peptide bonds, thereby polymerizing the amino acids delivered by tRNAs into a polypeptide chain. The nascent polypeptides leave the ribosome through a tunnel in the LSU and interact with protein factors that function in enzymatic processing, targeting, and the membrane insertion of nascent chains at the exit of the ribosomal tunnel (By similarity). Plays a role in the assembly and function of the 40S ribosomal subunit. Mutations in this protein affects the control of translational fidelity. Involved in nucleolar processing of pre-18S ribosomal RNA and ribosome assembly (By similarity).</text>
</comment>
<comment type="subunit">
    <text evidence="1">Component of the small ribosomal subunit. Interacts with zinc finger protein ZNF277 (via zinc-finger domains); the interaction is direct; the interaction is extra-ribosomal. Interaction with ZNF277 competes with the binding of RPS2 to protein arginine methyltransferase PRMT3.</text>
</comment>
<comment type="subcellular location">
    <subcellularLocation>
        <location evidence="1">Cytoplasm</location>
    </subcellularLocation>
    <subcellularLocation>
        <location evidence="1">Nucleus</location>
        <location evidence="1">Nucleolus</location>
    </subcellularLocation>
    <text evidence="1">Probably localized to nucleolus and cytoplasm in complex with ZNF277.</text>
</comment>
<comment type="PTM">
    <text evidence="1">Citrullinated by PADI4 in the Arg/Gly-rich region.</text>
</comment>
<comment type="PTM">
    <text evidence="1">Asymmetric arginine dimethylation by PRMT3 occurs at multiple sites in the Arg/Gly-rich region.</text>
</comment>
<comment type="PTM">
    <text evidence="1">Monoubiquitinated at Lys-54 and Lys-58 by RNF10 when a ribosome has stalled during translation, leading to its degradation by the proteasome. Deubiquitinated at Lys-54 and Lys-58 by USP10, preventing degradation by the proteasome and promoting 40S ribosome subunit recycling following ribosome dissociation.</text>
</comment>
<comment type="similarity">
    <text evidence="5">Belongs to the universal ribosomal protein uS5 family.</text>
</comment>
<gene>
    <name type="primary">RPS2</name>
</gene>
<protein>
    <recommendedName>
        <fullName evidence="5">Small ribosomal subunit protein uS5</fullName>
    </recommendedName>
    <alternativeName>
        <fullName>40S ribosomal protein S2</fullName>
    </alternativeName>
</protein>
<dbReference type="EMBL" id="BC102227">
    <property type="protein sequence ID" value="AAI02228.1"/>
    <property type="molecule type" value="mRNA"/>
</dbReference>
<dbReference type="EMBL" id="AF013215">
    <property type="protein sequence ID" value="AAB65437.1"/>
    <property type="molecule type" value="mRNA"/>
</dbReference>
<dbReference type="RefSeq" id="NP_001028785.1">
    <property type="nucleotide sequence ID" value="NM_001033613.2"/>
</dbReference>
<dbReference type="PDB" id="6MTD">
    <property type="method" value="EM"/>
    <property type="resolution" value="3.30 A"/>
    <property type="chains" value="CC=58-278"/>
</dbReference>
<dbReference type="PDB" id="6MTE">
    <property type="method" value="EM"/>
    <property type="resolution" value="3.40 A"/>
    <property type="chains" value="CC=58-278"/>
</dbReference>
<dbReference type="PDB" id="7SYM">
    <property type="method" value="EM"/>
    <property type="resolution" value="4.80 A"/>
    <property type="chains" value="D=58-278"/>
</dbReference>
<dbReference type="PDB" id="7ZJW">
    <property type="method" value="EM"/>
    <property type="resolution" value="2.80 A"/>
    <property type="chains" value="SN=1-293"/>
</dbReference>
<dbReference type="PDB" id="7ZJX">
    <property type="method" value="EM"/>
    <property type="resolution" value="3.10 A"/>
    <property type="chains" value="SN=1-293"/>
</dbReference>
<dbReference type="PDB" id="8P2K">
    <property type="method" value="EM"/>
    <property type="resolution" value="2.90 A"/>
    <property type="chains" value="Ab=1-293"/>
</dbReference>
<dbReference type="PDB" id="9BDL">
    <property type="method" value="EM"/>
    <property type="resolution" value="2.80 A"/>
    <property type="chains" value="AS02=58-278"/>
</dbReference>
<dbReference type="PDB" id="9BDN">
    <property type="method" value="EM"/>
    <property type="resolution" value="3.10 A"/>
    <property type="chains" value="AS02=58-278"/>
</dbReference>
<dbReference type="PDB" id="9BDP">
    <property type="method" value="EM"/>
    <property type="resolution" value="3.70 A"/>
    <property type="chains" value="AS02=58-278"/>
</dbReference>
<dbReference type="PDBsum" id="6MTD"/>
<dbReference type="PDBsum" id="6MTE"/>
<dbReference type="PDBsum" id="7SYM"/>
<dbReference type="PDBsum" id="7ZJW"/>
<dbReference type="PDBsum" id="7ZJX"/>
<dbReference type="PDBsum" id="8P2K"/>
<dbReference type="PDBsum" id="9BDL"/>
<dbReference type="PDBsum" id="9BDN"/>
<dbReference type="PDBsum" id="9BDP"/>
<dbReference type="EMDB" id="EMD-14751"/>
<dbReference type="EMDB" id="EMD-14752"/>
<dbReference type="EMDB" id="EMD-17367"/>
<dbReference type="EMDB" id="EMD-25533"/>
<dbReference type="EMDB" id="EMD-44461"/>
<dbReference type="EMDB" id="EMD-44463"/>
<dbReference type="EMDB" id="EMD-44464"/>
<dbReference type="EMDB" id="EMD-9240"/>
<dbReference type="EMDB" id="EMD-9242"/>
<dbReference type="SMR" id="O18789"/>
<dbReference type="FunCoup" id="O18789">
    <property type="interactions" value="2458"/>
</dbReference>
<dbReference type="STRING" id="9913.ENSBTAP00000012544"/>
<dbReference type="PaxDb" id="9913-ENSBTAP00000012544"/>
<dbReference type="PeptideAtlas" id="O18789"/>
<dbReference type="GeneID" id="286867"/>
<dbReference type="KEGG" id="bta:286867"/>
<dbReference type="CTD" id="6187"/>
<dbReference type="eggNOG" id="KOG0877">
    <property type="taxonomic scope" value="Eukaryota"/>
</dbReference>
<dbReference type="HOGENOM" id="CLU_065898_0_2_1"/>
<dbReference type="InParanoid" id="O18789"/>
<dbReference type="OrthoDB" id="10253125at2759"/>
<dbReference type="TreeFam" id="TF300806"/>
<dbReference type="Proteomes" id="UP000009136">
    <property type="component" value="Unplaced"/>
</dbReference>
<dbReference type="GO" id="GO:0022627">
    <property type="term" value="C:cytosolic small ribosomal subunit"/>
    <property type="evidence" value="ECO:0000318"/>
    <property type="project" value="GO_Central"/>
</dbReference>
<dbReference type="GO" id="GO:0005730">
    <property type="term" value="C:nucleolus"/>
    <property type="evidence" value="ECO:0007669"/>
    <property type="project" value="UniProtKB-SubCell"/>
</dbReference>
<dbReference type="GO" id="GO:0003723">
    <property type="term" value="F:RNA binding"/>
    <property type="evidence" value="ECO:0007669"/>
    <property type="project" value="InterPro"/>
</dbReference>
<dbReference type="GO" id="GO:0003735">
    <property type="term" value="F:structural constituent of ribosome"/>
    <property type="evidence" value="ECO:0000318"/>
    <property type="project" value="GO_Central"/>
</dbReference>
<dbReference type="GO" id="GO:0006412">
    <property type="term" value="P:translation"/>
    <property type="evidence" value="ECO:0000318"/>
    <property type="project" value="GO_Central"/>
</dbReference>
<dbReference type="FunFam" id="3.30.160.20:FF:000133">
    <property type="entry name" value="40S ribosomal protein S2"/>
    <property type="match status" value="1"/>
</dbReference>
<dbReference type="FunFam" id="3.30.230.10:FF:000004">
    <property type="entry name" value="40S ribosomal protein S2"/>
    <property type="match status" value="1"/>
</dbReference>
<dbReference type="Gene3D" id="3.30.160.20">
    <property type="match status" value="1"/>
</dbReference>
<dbReference type="Gene3D" id="3.30.230.10">
    <property type="match status" value="1"/>
</dbReference>
<dbReference type="InterPro" id="IPR020568">
    <property type="entry name" value="Ribosomal_Su5_D2-typ_SF"/>
</dbReference>
<dbReference type="InterPro" id="IPR000851">
    <property type="entry name" value="Ribosomal_uS5"/>
</dbReference>
<dbReference type="InterPro" id="IPR005324">
    <property type="entry name" value="Ribosomal_uS5_C"/>
</dbReference>
<dbReference type="InterPro" id="IPR005711">
    <property type="entry name" value="Ribosomal_uS5_euk/arc"/>
</dbReference>
<dbReference type="InterPro" id="IPR013810">
    <property type="entry name" value="Ribosomal_uS5_N"/>
</dbReference>
<dbReference type="InterPro" id="IPR018192">
    <property type="entry name" value="Ribosomal_uS5_N_CS"/>
</dbReference>
<dbReference type="InterPro" id="IPR014721">
    <property type="entry name" value="Ribsml_uS5_D2-typ_fold_subgr"/>
</dbReference>
<dbReference type="NCBIfam" id="TIGR01020">
    <property type="entry name" value="uS5_euk_arch"/>
    <property type="match status" value="1"/>
</dbReference>
<dbReference type="PANTHER" id="PTHR13718:SF4">
    <property type="entry name" value="40S RIBOSOMAL PROTEIN S2"/>
    <property type="match status" value="1"/>
</dbReference>
<dbReference type="PANTHER" id="PTHR13718">
    <property type="entry name" value="RIBOSOMAL S SUBUNIT"/>
    <property type="match status" value="1"/>
</dbReference>
<dbReference type="Pfam" id="PF00333">
    <property type="entry name" value="Ribosomal_S5"/>
    <property type="match status" value="1"/>
</dbReference>
<dbReference type="Pfam" id="PF03719">
    <property type="entry name" value="Ribosomal_S5_C"/>
    <property type="match status" value="1"/>
</dbReference>
<dbReference type="SUPFAM" id="SSF54768">
    <property type="entry name" value="dsRNA-binding domain-like"/>
    <property type="match status" value="1"/>
</dbReference>
<dbReference type="SUPFAM" id="SSF54211">
    <property type="entry name" value="Ribosomal protein S5 domain 2-like"/>
    <property type="match status" value="1"/>
</dbReference>
<dbReference type="PROSITE" id="PS00585">
    <property type="entry name" value="RIBOSOMAL_S5"/>
    <property type="match status" value="1"/>
</dbReference>
<dbReference type="PROSITE" id="PS50881">
    <property type="entry name" value="S5_DSRBD"/>
    <property type="match status" value="1"/>
</dbReference>
<proteinExistence type="evidence at protein level"/>
<feature type="initiator methionine" description="Removed" evidence="1">
    <location>
        <position position="1"/>
    </location>
</feature>
<feature type="chain" id="PRO_0000131671" description="Small ribosomal subunit protein uS5">
    <location>
        <begin position="2"/>
        <end position="293"/>
    </location>
</feature>
<feature type="domain" description="S5 DRBM" evidence="3">
    <location>
        <begin position="102"/>
        <end position="165"/>
    </location>
</feature>
<feature type="region of interest" description="Disordered" evidence="4">
    <location>
        <begin position="1"/>
        <end position="56"/>
    </location>
</feature>
<feature type="compositionally biased region" description="Gly residues" evidence="4">
    <location>
        <begin position="7"/>
        <end position="34"/>
    </location>
</feature>
<feature type="compositionally biased region" description="Basic residues" evidence="4">
    <location>
        <begin position="35"/>
        <end position="51"/>
    </location>
</feature>
<feature type="modified residue" description="N-acetylalanine" evidence="1">
    <location>
        <position position="2"/>
    </location>
</feature>
<feature type="modified residue" description="Phosphothreonine" evidence="1">
    <location>
        <position position="252"/>
    </location>
</feature>
<feature type="modified residue" description="N6-acetyllysine" evidence="1">
    <location>
        <position position="263"/>
    </location>
</feature>
<feature type="modified residue" description="Phosphoserine" evidence="1">
    <location>
        <position position="264"/>
    </location>
</feature>
<feature type="modified residue" description="Phosphothreonine" evidence="1">
    <location>
        <position position="270"/>
    </location>
</feature>
<feature type="modified residue" description="N6-acetyllysine; alternate" evidence="1">
    <location>
        <position position="275"/>
    </location>
</feature>
<feature type="modified residue" description="Phosphoserine" evidence="1">
    <location>
        <position position="281"/>
    </location>
</feature>
<feature type="cross-link" description="Glycyl lysine isopeptide (Lys-Gly) (interchain with G-Cter in ubiquitin)" evidence="1">
    <location>
        <position position="54"/>
    </location>
</feature>
<feature type="cross-link" description="Glycyl lysine isopeptide (Lys-Gly) (interchain with G-Cter in ubiquitin)" evidence="1">
    <location>
        <position position="58"/>
    </location>
</feature>
<feature type="cross-link" description="Glycyl lysine isopeptide (Lys-Gly) (interchain with G-Cter in SUMO1); alternate" evidence="1">
    <location>
        <position position="275"/>
    </location>
</feature>
<feature type="cross-link" description="Glycyl lysine isopeptide (Lys-Gly) (interchain with G-Cter in SUMO2); alternate" evidence="1">
    <location>
        <position position="275"/>
    </location>
</feature>
<feature type="cross-link" description="Glycyl lysine isopeptide (Lys-Gly) (interchain with G-Cter in ubiquitin); alternate" evidence="1">
    <location>
        <position position="275"/>
    </location>
</feature>
<feature type="sequence conflict" description="In Ref. 2; AAB65437." evidence="5" ref="2">
    <original>R</original>
    <variation>G</variation>
    <location>
        <position position="48"/>
    </location>
</feature>
<feature type="sequence conflict" description="In Ref. 2; AAB65437." evidence="5" ref="2">
    <original>A</original>
    <variation>P</variation>
    <location>
        <position position="198"/>
    </location>
</feature>
<evidence type="ECO:0000250" key="1">
    <source>
        <dbReference type="UniProtKB" id="P15880"/>
    </source>
</evidence>
<evidence type="ECO:0000250" key="2">
    <source>
        <dbReference type="UniProtKB" id="P25443"/>
    </source>
</evidence>
<evidence type="ECO:0000255" key="3">
    <source>
        <dbReference type="PROSITE-ProRule" id="PRU00268"/>
    </source>
</evidence>
<evidence type="ECO:0000256" key="4">
    <source>
        <dbReference type="SAM" id="MobiDB-lite"/>
    </source>
</evidence>
<evidence type="ECO:0000305" key="5"/>
<sequence>MADDAGAAGGPGGPGGPGMGGRGGFRGGFGSGVRGRGRGRGRGRGRGRGARGGKAEDKEWLPVTKLGRLVKDMKIKSLEEIYLFSLPIKESEIIDFFLGASLKDEVLKIMPVQKQTRAGQRTRFKAFVAIGDYNGHVGLGVKCSKEVATAIRGAIILAKLSIVPVRRGYWGNKIGKPHTVPCKVTGRCGSVLVRLIPAPRGTGIVSAPVPKKLLMMAGIDDCYTSARGCTATLGNFAKATFDAISKTYSYLTPDLWKETVFTKSPYQEFTDHLVKTHTRVSVQRTQAPAVATT</sequence>
<name>RS2_BOVIN</name>